<sequence length="220" mass="24513">MKKEKAVVVFSGGQDSTTCLFWAIEQFAEVEAVTFNYNQRHKLEIDCAAEIAKELGIKHTVLDMSLLNQLAPNALTRTDMEITHEEGELPSTFVDGRNLLFLSFAAVLAKQVGARHIVTGVCETDFSGYPDCRDVFVKSLNVTLNLSMDYPFVIHTPLMWIDKAETWKLSDELGAFEFVREKTLTCYNGIIGDGCGECPACQLRKAGLDTYLQEREGASN</sequence>
<organism>
    <name type="scientific">Bacillus cereus (strain 03BB102)</name>
    <dbReference type="NCBI Taxonomy" id="572264"/>
    <lineage>
        <taxon>Bacteria</taxon>
        <taxon>Bacillati</taxon>
        <taxon>Bacillota</taxon>
        <taxon>Bacilli</taxon>
        <taxon>Bacillales</taxon>
        <taxon>Bacillaceae</taxon>
        <taxon>Bacillus</taxon>
        <taxon>Bacillus cereus group</taxon>
    </lineage>
</organism>
<name>QUEC_BACC3</name>
<evidence type="ECO:0000255" key="1">
    <source>
        <dbReference type="HAMAP-Rule" id="MF_01633"/>
    </source>
</evidence>
<dbReference type="EC" id="6.3.4.20" evidence="1"/>
<dbReference type="EMBL" id="CP001407">
    <property type="protein sequence ID" value="ACO26083.1"/>
    <property type="molecule type" value="Genomic_DNA"/>
</dbReference>
<dbReference type="RefSeq" id="WP_000711596.1">
    <property type="nucleotide sequence ID" value="NZ_CP009318.1"/>
</dbReference>
<dbReference type="SMR" id="C1EM49"/>
<dbReference type="GeneID" id="93009699"/>
<dbReference type="KEGG" id="bcx:BCA_1395"/>
<dbReference type="PATRIC" id="fig|572264.18.peg.1345"/>
<dbReference type="UniPathway" id="UPA00391"/>
<dbReference type="Proteomes" id="UP000002210">
    <property type="component" value="Chromosome"/>
</dbReference>
<dbReference type="GO" id="GO:0005524">
    <property type="term" value="F:ATP binding"/>
    <property type="evidence" value="ECO:0007669"/>
    <property type="project" value="UniProtKB-UniRule"/>
</dbReference>
<dbReference type="GO" id="GO:0016879">
    <property type="term" value="F:ligase activity, forming carbon-nitrogen bonds"/>
    <property type="evidence" value="ECO:0007669"/>
    <property type="project" value="UniProtKB-UniRule"/>
</dbReference>
<dbReference type="GO" id="GO:0008270">
    <property type="term" value="F:zinc ion binding"/>
    <property type="evidence" value="ECO:0007669"/>
    <property type="project" value="UniProtKB-UniRule"/>
</dbReference>
<dbReference type="GO" id="GO:0008616">
    <property type="term" value="P:queuosine biosynthetic process"/>
    <property type="evidence" value="ECO:0007669"/>
    <property type="project" value="UniProtKB-UniRule"/>
</dbReference>
<dbReference type="CDD" id="cd01995">
    <property type="entry name" value="QueC-like"/>
    <property type="match status" value="1"/>
</dbReference>
<dbReference type="FunFam" id="3.40.50.620:FF:000017">
    <property type="entry name" value="7-cyano-7-deazaguanine synthase"/>
    <property type="match status" value="1"/>
</dbReference>
<dbReference type="Gene3D" id="3.40.50.620">
    <property type="entry name" value="HUPs"/>
    <property type="match status" value="1"/>
</dbReference>
<dbReference type="HAMAP" id="MF_01633">
    <property type="entry name" value="QueC"/>
    <property type="match status" value="1"/>
</dbReference>
<dbReference type="InterPro" id="IPR018317">
    <property type="entry name" value="QueC"/>
</dbReference>
<dbReference type="InterPro" id="IPR014729">
    <property type="entry name" value="Rossmann-like_a/b/a_fold"/>
</dbReference>
<dbReference type="NCBIfam" id="TIGR00364">
    <property type="entry name" value="7-cyano-7-deazaguanine synthase QueC"/>
    <property type="match status" value="1"/>
</dbReference>
<dbReference type="PANTHER" id="PTHR42914">
    <property type="entry name" value="7-CYANO-7-DEAZAGUANINE SYNTHASE"/>
    <property type="match status" value="1"/>
</dbReference>
<dbReference type="PANTHER" id="PTHR42914:SF1">
    <property type="entry name" value="7-CYANO-7-DEAZAGUANINE SYNTHASE"/>
    <property type="match status" value="1"/>
</dbReference>
<dbReference type="Pfam" id="PF06508">
    <property type="entry name" value="QueC"/>
    <property type="match status" value="1"/>
</dbReference>
<dbReference type="PIRSF" id="PIRSF006293">
    <property type="entry name" value="ExsB"/>
    <property type="match status" value="1"/>
</dbReference>
<dbReference type="SUPFAM" id="SSF52402">
    <property type="entry name" value="Adenine nucleotide alpha hydrolases-like"/>
    <property type="match status" value="1"/>
</dbReference>
<feature type="chain" id="PRO_1000186557" description="7-cyano-7-deazaguanine synthase">
    <location>
        <begin position="1"/>
        <end position="220"/>
    </location>
</feature>
<feature type="binding site" evidence="1">
    <location>
        <begin position="10"/>
        <end position="20"/>
    </location>
    <ligand>
        <name>ATP</name>
        <dbReference type="ChEBI" id="CHEBI:30616"/>
    </ligand>
</feature>
<feature type="binding site" evidence="1">
    <location>
        <position position="186"/>
    </location>
    <ligand>
        <name>Zn(2+)</name>
        <dbReference type="ChEBI" id="CHEBI:29105"/>
    </ligand>
</feature>
<feature type="binding site" evidence="1">
    <location>
        <position position="195"/>
    </location>
    <ligand>
        <name>Zn(2+)</name>
        <dbReference type="ChEBI" id="CHEBI:29105"/>
    </ligand>
</feature>
<feature type="binding site" evidence="1">
    <location>
        <position position="198"/>
    </location>
    <ligand>
        <name>Zn(2+)</name>
        <dbReference type="ChEBI" id="CHEBI:29105"/>
    </ligand>
</feature>
<feature type="binding site" evidence="1">
    <location>
        <position position="201"/>
    </location>
    <ligand>
        <name>Zn(2+)</name>
        <dbReference type="ChEBI" id="CHEBI:29105"/>
    </ligand>
</feature>
<proteinExistence type="inferred from homology"/>
<keyword id="KW-0067">ATP-binding</keyword>
<keyword id="KW-0436">Ligase</keyword>
<keyword id="KW-0479">Metal-binding</keyword>
<keyword id="KW-0547">Nucleotide-binding</keyword>
<keyword id="KW-0671">Queuosine biosynthesis</keyword>
<keyword id="KW-0862">Zinc</keyword>
<gene>
    <name evidence="1" type="primary">queC</name>
    <name type="ordered locus">BCA_1395</name>
</gene>
<protein>
    <recommendedName>
        <fullName evidence="1">7-cyano-7-deazaguanine synthase</fullName>
        <ecNumber evidence="1">6.3.4.20</ecNumber>
    </recommendedName>
    <alternativeName>
        <fullName evidence="1">7-cyano-7-carbaguanine synthase</fullName>
    </alternativeName>
    <alternativeName>
        <fullName evidence="1">PreQ(0) synthase</fullName>
    </alternativeName>
    <alternativeName>
        <fullName evidence="1">Queuosine biosynthesis protein QueC</fullName>
    </alternativeName>
</protein>
<accession>C1EM49</accession>
<reference key="1">
    <citation type="submission" date="2009-02" db="EMBL/GenBank/DDBJ databases">
        <title>Genome sequence of Bacillus cereus 03BB102.</title>
        <authorList>
            <person name="Dodson R.J."/>
            <person name="Jackson P."/>
            <person name="Munk A.C."/>
            <person name="Brettin T."/>
            <person name="Bruce D."/>
            <person name="Detter C."/>
            <person name="Tapia R."/>
            <person name="Han C."/>
            <person name="Sutton G."/>
            <person name="Sims D."/>
        </authorList>
    </citation>
    <scope>NUCLEOTIDE SEQUENCE [LARGE SCALE GENOMIC DNA]</scope>
    <source>
        <strain>03BB102</strain>
    </source>
</reference>
<comment type="function">
    <text evidence="1">Catalyzes the ATP-dependent conversion of 7-carboxy-7-deazaguanine (CDG) to 7-cyano-7-deazaguanine (preQ(0)).</text>
</comment>
<comment type="catalytic activity">
    <reaction evidence="1">
        <text>7-carboxy-7-deazaguanine + NH4(+) + ATP = 7-cyano-7-deazaguanine + ADP + phosphate + H2O + H(+)</text>
        <dbReference type="Rhea" id="RHEA:27982"/>
        <dbReference type="ChEBI" id="CHEBI:15377"/>
        <dbReference type="ChEBI" id="CHEBI:15378"/>
        <dbReference type="ChEBI" id="CHEBI:28938"/>
        <dbReference type="ChEBI" id="CHEBI:30616"/>
        <dbReference type="ChEBI" id="CHEBI:43474"/>
        <dbReference type="ChEBI" id="CHEBI:45075"/>
        <dbReference type="ChEBI" id="CHEBI:61036"/>
        <dbReference type="ChEBI" id="CHEBI:456216"/>
        <dbReference type="EC" id="6.3.4.20"/>
    </reaction>
</comment>
<comment type="cofactor">
    <cofactor evidence="1">
        <name>Zn(2+)</name>
        <dbReference type="ChEBI" id="CHEBI:29105"/>
    </cofactor>
    <text evidence="1">Binds 1 zinc ion per subunit.</text>
</comment>
<comment type="pathway">
    <text evidence="1">Purine metabolism; 7-cyano-7-deazaguanine biosynthesis.</text>
</comment>
<comment type="subunit">
    <text evidence="1">Homodimer.</text>
</comment>
<comment type="similarity">
    <text evidence="1">Belongs to the QueC family.</text>
</comment>